<gene>
    <name evidence="1" type="primary">gmk</name>
    <name type="ordered locus">SpyM3_1375</name>
</gene>
<sequence>MSERGLLIVFSGPSGVGKGTVRQEIFSTPDHKFEYSVSMTTRPQRPGEVDGVDYFFRTREEFEELIKTGQMLEYAEYVGNYYGTPLTYVNETLDKGIDVFLEIEVQGALQVKSKVPDGVFVFLTPPDLDELEDRLVGRGTDSQEVIAQRIERAKEEIALMREYDYAVVNDEVALAAERVKRIIETEHFRVERVIGRYDKMIKITKNPFKAK</sequence>
<organism>
    <name type="scientific">Streptococcus pyogenes serotype M3 (strain ATCC BAA-595 / MGAS315)</name>
    <dbReference type="NCBI Taxonomy" id="198466"/>
    <lineage>
        <taxon>Bacteria</taxon>
        <taxon>Bacillati</taxon>
        <taxon>Bacillota</taxon>
        <taxon>Bacilli</taxon>
        <taxon>Lactobacillales</taxon>
        <taxon>Streptococcaceae</taxon>
        <taxon>Streptococcus</taxon>
    </lineage>
</organism>
<accession>P0DB94</accession>
<accession>P65222</accession>
<accession>Q8P001</accession>
<comment type="function">
    <text evidence="1">Essential for recycling GMP and indirectly, cGMP.</text>
</comment>
<comment type="catalytic activity">
    <reaction evidence="1">
        <text>GMP + ATP = GDP + ADP</text>
        <dbReference type="Rhea" id="RHEA:20780"/>
        <dbReference type="ChEBI" id="CHEBI:30616"/>
        <dbReference type="ChEBI" id="CHEBI:58115"/>
        <dbReference type="ChEBI" id="CHEBI:58189"/>
        <dbReference type="ChEBI" id="CHEBI:456216"/>
        <dbReference type="EC" id="2.7.4.8"/>
    </reaction>
</comment>
<comment type="subcellular location">
    <subcellularLocation>
        <location evidence="1">Cytoplasm</location>
    </subcellularLocation>
</comment>
<comment type="similarity">
    <text evidence="1">Belongs to the guanylate kinase family.</text>
</comment>
<reference key="1">
    <citation type="journal article" date="2002" name="Proc. Natl. Acad. Sci. U.S.A.">
        <title>Genome sequence of a serotype M3 strain of group A Streptococcus: phage-encoded toxins, the high-virulence phenotype, and clone emergence.</title>
        <authorList>
            <person name="Beres S.B."/>
            <person name="Sylva G.L."/>
            <person name="Barbian K.D."/>
            <person name="Lei B."/>
            <person name="Hoff J.S."/>
            <person name="Mammarella N.D."/>
            <person name="Liu M.-Y."/>
            <person name="Smoot J.C."/>
            <person name="Porcella S.F."/>
            <person name="Parkins L.D."/>
            <person name="Campbell D.S."/>
            <person name="Smith T.M."/>
            <person name="McCormick J.K."/>
            <person name="Leung D.Y.M."/>
            <person name="Schlievert P.M."/>
            <person name="Musser J.M."/>
        </authorList>
    </citation>
    <scope>NUCLEOTIDE SEQUENCE [LARGE SCALE GENOMIC DNA]</scope>
    <source>
        <strain>ATCC BAA-595 / MGAS315</strain>
    </source>
</reference>
<keyword id="KW-0067">ATP-binding</keyword>
<keyword id="KW-0963">Cytoplasm</keyword>
<keyword id="KW-0418">Kinase</keyword>
<keyword id="KW-0547">Nucleotide-binding</keyword>
<keyword id="KW-0808">Transferase</keyword>
<dbReference type="EC" id="2.7.4.8" evidence="1"/>
<dbReference type="EMBL" id="AE014074">
    <property type="protein sequence ID" value="AAM79982.1"/>
    <property type="molecule type" value="Genomic_DNA"/>
</dbReference>
<dbReference type="RefSeq" id="WP_002983649.1">
    <property type="nucleotide sequence ID" value="NC_004070.1"/>
</dbReference>
<dbReference type="SMR" id="P0DB94"/>
<dbReference type="GeneID" id="69900497"/>
<dbReference type="KEGG" id="spg:SpyM3_1375"/>
<dbReference type="HOGENOM" id="CLU_001715_1_2_9"/>
<dbReference type="Proteomes" id="UP000000564">
    <property type="component" value="Chromosome"/>
</dbReference>
<dbReference type="GO" id="GO:0005829">
    <property type="term" value="C:cytosol"/>
    <property type="evidence" value="ECO:0007669"/>
    <property type="project" value="TreeGrafter"/>
</dbReference>
<dbReference type="GO" id="GO:0005524">
    <property type="term" value="F:ATP binding"/>
    <property type="evidence" value="ECO:0007669"/>
    <property type="project" value="UniProtKB-UniRule"/>
</dbReference>
<dbReference type="GO" id="GO:0004385">
    <property type="term" value="F:guanylate kinase activity"/>
    <property type="evidence" value="ECO:0007669"/>
    <property type="project" value="UniProtKB-UniRule"/>
</dbReference>
<dbReference type="CDD" id="cd00071">
    <property type="entry name" value="GMPK"/>
    <property type="match status" value="1"/>
</dbReference>
<dbReference type="FunFam" id="3.40.50.300:FF:000855">
    <property type="entry name" value="Guanylate kinase"/>
    <property type="match status" value="1"/>
</dbReference>
<dbReference type="FunFam" id="3.30.63.10:FF:000002">
    <property type="entry name" value="Guanylate kinase 1"/>
    <property type="match status" value="1"/>
</dbReference>
<dbReference type="Gene3D" id="3.30.63.10">
    <property type="entry name" value="Guanylate Kinase phosphate binding domain"/>
    <property type="match status" value="1"/>
</dbReference>
<dbReference type="Gene3D" id="3.40.50.300">
    <property type="entry name" value="P-loop containing nucleotide triphosphate hydrolases"/>
    <property type="match status" value="2"/>
</dbReference>
<dbReference type="HAMAP" id="MF_00328">
    <property type="entry name" value="Guanylate_kinase"/>
    <property type="match status" value="1"/>
</dbReference>
<dbReference type="InterPro" id="IPR008145">
    <property type="entry name" value="GK/Ca_channel_bsu"/>
</dbReference>
<dbReference type="InterPro" id="IPR008144">
    <property type="entry name" value="Guanylate_kin-like_dom"/>
</dbReference>
<dbReference type="InterPro" id="IPR017665">
    <property type="entry name" value="Guanylate_kinase"/>
</dbReference>
<dbReference type="InterPro" id="IPR020590">
    <property type="entry name" value="Guanylate_kinase_CS"/>
</dbReference>
<dbReference type="InterPro" id="IPR027417">
    <property type="entry name" value="P-loop_NTPase"/>
</dbReference>
<dbReference type="NCBIfam" id="TIGR03263">
    <property type="entry name" value="guanyl_kin"/>
    <property type="match status" value="1"/>
</dbReference>
<dbReference type="PANTHER" id="PTHR23117:SF13">
    <property type="entry name" value="GUANYLATE KINASE"/>
    <property type="match status" value="1"/>
</dbReference>
<dbReference type="PANTHER" id="PTHR23117">
    <property type="entry name" value="GUANYLATE KINASE-RELATED"/>
    <property type="match status" value="1"/>
</dbReference>
<dbReference type="Pfam" id="PF00625">
    <property type="entry name" value="Guanylate_kin"/>
    <property type="match status" value="1"/>
</dbReference>
<dbReference type="SMART" id="SM00072">
    <property type="entry name" value="GuKc"/>
    <property type="match status" value="1"/>
</dbReference>
<dbReference type="SUPFAM" id="SSF52540">
    <property type="entry name" value="P-loop containing nucleoside triphosphate hydrolases"/>
    <property type="match status" value="1"/>
</dbReference>
<dbReference type="PROSITE" id="PS00856">
    <property type="entry name" value="GUANYLATE_KINASE_1"/>
    <property type="match status" value="1"/>
</dbReference>
<dbReference type="PROSITE" id="PS50052">
    <property type="entry name" value="GUANYLATE_KINASE_2"/>
    <property type="match status" value="1"/>
</dbReference>
<proteinExistence type="inferred from homology"/>
<name>KGUA_STRP3</name>
<feature type="chain" id="PRO_0000170621" description="Guanylate kinase">
    <location>
        <begin position="1"/>
        <end position="211"/>
    </location>
</feature>
<feature type="domain" description="Guanylate kinase-like" evidence="1">
    <location>
        <begin position="5"/>
        <end position="184"/>
    </location>
</feature>
<feature type="binding site" evidence="1">
    <location>
        <begin position="12"/>
        <end position="19"/>
    </location>
    <ligand>
        <name>ATP</name>
        <dbReference type="ChEBI" id="CHEBI:30616"/>
    </ligand>
</feature>
<protein>
    <recommendedName>
        <fullName evidence="1">Guanylate kinase</fullName>
        <ecNumber evidence="1">2.7.4.8</ecNumber>
    </recommendedName>
    <alternativeName>
        <fullName evidence="1">GMP kinase</fullName>
    </alternativeName>
</protein>
<evidence type="ECO:0000255" key="1">
    <source>
        <dbReference type="HAMAP-Rule" id="MF_00328"/>
    </source>
</evidence>